<gene>
    <name evidence="32" type="primary">H2BC21</name>
    <name type="synonym">H2BFQ</name>
    <name evidence="32" type="synonym">HIST2H2BE</name>
</gene>
<name>H2B2E_HUMAN</name>
<sequence>MPEPAKSAPAPKKGSKKAVTKAQKKDGKKRKRSRKESYSIYVYKVLKQVHPDTGISSKAMGIMNSFVNDIFERIAGEASRLAHYNKRSTITSREIQTAVRLLLPGELAKHAVSEGTKAVTKYTSSK</sequence>
<accession>Q16778</accession>
<accession>A3KMC7</accession>
<accession>A8K110</accession>
<accession>Q4KMY1</accession>
<accession>Q5QNX0</accession>
<accession>Q9UE88</accession>
<keyword id="KW-0002">3D-structure</keyword>
<keyword id="KW-0007">Acetylation</keyword>
<keyword id="KW-0013">ADP-ribosylation</keyword>
<keyword id="KW-0044">Antibiotic</keyword>
<keyword id="KW-0929">Antimicrobial</keyword>
<keyword id="KW-0158">Chromosome</keyword>
<keyword id="KW-0903">Direct protein sequencing</keyword>
<keyword id="KW-0238">DNA-binding</keyword>
<keyword id="KW-0325">Glycoprotein</keyword>
<keyword id="KW-0379">Hydroxylation</keyword>
<keyword id="KW-1017">Isopeptide bond</keyword>
<keyword id="KW-0488">Methylation</keyword>
<keyword id="KW-0544">Nucleosome core</keyword>
<keyword id="KW-0539">Nucleus</keyword>
<keyword id="KW-0597">Phosphoprotein</keyword>
<keyword id="KW-1185">Reference proteome</keyword>
<keyword id="KW-0832">Ubl conjugation</keyword>
<organism>
    <name type="scientific">Homo sapiens</name>
    <name type="common">Human</name>
    <dbReference type="NCBI Taxonomy" id="9606"/>
    <lineage>
        <taxon>Eukaryota</taxon>
        <taxon>Metazoa</taxon>
        <taxon>Chordata</taxon>
        <taxon>Craniata</taxon>
        <taxon>Vertebrata</taxon>
        <taxon>Euteleostomi</taxon>
        <taxon>Mammalia</taxon>
        <taxon>Eutheria</taxon>
        <taxon>Euarchontoglires</taxon>
        <taxon>Primates</taxon>
        <taxon>Haplorrhini</taxon>
        <taxon>Catarrhini</taxon>
        <taxon>Hominidae</taxon>
        <taxon>Homo</taxon>
    </lineage>
</organism>
<protein>
    <recommendedName>
        <fullName>Histone H2B type 2-E</fullName>
    </recommendedName>
    <alternativeName>
        <fullName evidence="32">H2B-clustered histone 21</fullName>
    </alternativeName>
    <alternativeName>
        <fullName>Histone H2B-GL105</fullName>
    </alternativeName>
    <alternativeName>
        <fullName>Histone H2B.q</fullName>
        <shortName>H2B/q</shortName>
    </alternativeName>
</protein>
<feature type="initiator methionine" description="Removed" evidence="1 12 14 15 30">
    <location>
        <position position="1"/>
    </location>
</feature>
<feature type="chain" id="PRO_0000071835" description="Histone H2B type 2-E">
    <location>
        <begin position="2"/>
        <end position="126"/>
    </location>
</feature>
<feature type="region of interest" description="Disordered" evidence="11">
    <location>
        <begin position="1"/>
        <end position="35"/>
    </location>
</feature>
<feature type="compositionally biased region" description="Low complexity" evidence="11">
    <location>
        <begin position="1"/>
        <end position="12"/>
    </location>
</feature>
<feature type="modified residue" description="N-acetylproline" evidence="1">
    <location>
        <position position="2"/>
    </location>
</feature>
<feature type="modified residue" description="ADP-ribosyl glutamic acid" evidence="26">
    <location>
        <position position="3"/>
    </location>
</feature>
<feature type="modified residue" description="N6-(2-hydroxyisobutyryl)lysine; alternate" evidence="23">
    <location>
        <position position="6"/>
    </location>
</feature>
<feature type="modified residue" description="N6-(beta-hydroxybutyryl)lysine; alternate" evidence="25">
    <location>
        <position position="6"/>
    </location>
</feature>
<feature type="modified residue" description="N6-acetyllysine; alternate" evidence="16 18">
    <location>
        <position position="6"/>
    </location>
</feature>
<feature type="modified residue" description="N6-butyryllysine; alternate" evidence="24">
    <location>
        <position position="6"/>
    </location>
</feature>
<feature type="modified residue" description="N6-crotonyllysine; alternate" evidence="21">
    <location>
        <position position="6"/>
    </location>
</feature>
<feature type="modified residue" description="N6-lactoyllysine; alternate" evidence="28">
    <location>
        <position position="6"/>
    </location>
</feature>
<feature type="modified residue" description="ADP-ribosylserine" evidence="29">
    <location>
        <position position="7"/>
    </location>
</feature>
<feature type="modified residue" description="N6-(beta-hydroxybutyryl)lysine; alternate" evidence="25">
    <location>
        <position position="12"/>
    </location>
</feature>
<feature type="modified residue" description="N6-acetyllysine; alternate" evidence="18">
    <location>
        <position position="12"/>
    </location>
</feature>
<feature type="modified residue" description="N6-crotonyllysine; alternate" evidence="21">
    <location>
        <position position="12"/>
    </location>
</feature>
<feature type="modified residue" description="N6-lactoyllysine; alternate" evidence="28">
    <location>
        <position position="12"/>
    </location>
</feature>
<feature type="modified residue" description="N6-(2-hydroxyisobutyryl)lysine; alternate" evidence="23">
    <location>
        <position position="13"/>
    </location>
</feature>
<feature type="modified residue" description="N6-acetyllysine; alternate" evidence="16 18">
    <location>
        <position position="13"/>
    </location>
</feature>
<feature type="modified residue" description="N6-crotonyllysine; alternate" evidence="21">
    <location>
        <position position="13"/>
    </location>
</feature>
<feature type="modified residue" description="Phosphoserine; by STK4/MST1" evidence="13">
    <location>
        <position position="15"/>
    </location>
</feature>
<feature type="modified residue" description="N6-acetyllysine; alternate" evidence="16 18">
    <location>
        <position position="16"/>
    </location>
</feature>
<feature type="modified residue" description="N6-crotonyllysine; alternate" evidence="21">
    <location>
        <position position="16"/>
    </location>
</feature>
<feature type="modified residue" description="N6-lactoyllysine; alternate" evidence="28">
    <location>
        <position position="16"/>
    </location>
</feature>
<feature type="modified residue" description="N6-(beta-hydroxybutyryl)lysine; alternate" evidence="25">
    <location>
        <position position="17"/>
    </location>
</feature>
<feature type="modified residue" description="N6-acetyllysine; alternate" evidence="18">
    <location>
        <position position="17"/>
    </location>
</feature>
<feature type="modified residue" description="N6-crotonyllysine; alternate" evidence="21">
    <location>
        <position position="17"/>
    </location>
</feature>
<feature type="modified residue" description="N6-glutaryllysine; alternate" evidence="27">
    <location>
        <position position="17"/>
    </location>
</feature>
<feature type="modified residue" description="N6-lactoyllysine; alternate" evidence="28">
    <location>
        <position position="17"/>
    </location>
</feature>
<feature type="modified residue" description="N6-(2-hydroxyisobutyryl)lysine; alternate" evidence="23">
    <location>
        <position position="21"/>
    </location>
</feature>
<feature type="modified residue" description="N6-(beta-hydroxybutyryl)lysine; alternate" evidence="25">
    <location>
        <position position="21"/>
    </location>
</feature>
<feature type="modified residue" description="N6-acetyllysine; alternate" evidence="16 18">
    <location>
        <position position="21"/>
    </location>
</feature>
<feature type="modified residue" description="N6-butyryllysine; alternate" evidence="24">
    <location>
        <position position="21"/>
    </location>
</feature>
<feature type="modified residue" description="N6-crotonyllysine; alternate" evidence="21">
    <location>
        <position position="21"/>
    </location>
</feature>
<feature type="modified residue" description="N6-lactoyllysine; alternate" evidence="28">
    <location>
        <position position="21"/>
    </location>
</feature>
<feature type="modified residue" description="N6-(2-hydroxyisobutyryl)lysine; alternate" evidence="23">
    <location>
        <position position="24"/>
    </location>
</feature>
<feature type="modified residue" description="N6-acetyllysine; alternate" evidence="2">
    <location>
        <position position="24"/>
    </location>
</feature>
<feature type="modified residue" description="N6-crotonyllysine; alternate" evidence="21">
    <location>
        <position position="24"/>
    </location>
</feature>
<feature type="modified residue" description="N6-lactoyllysine; alternate" evidence="28">
    <location>
        <position position="24"/>
    </location>
</feature>
<feature type="modified residue" description="N6-(2-hydroxyisobutyryl)lysine" evidence="23">
    <location>
        <position position="25"/>
    </location>
</feature>
<feature type="modified residue" description="N6-(2-hydroxyisobutyryl)lysine; alternate" evidence="23">
    <location>
        <position position="35"/>
    </location>
</feature>
<feature type="modified residue" description="N6-(beta-hydroxybutyryl)lysine; alternate" evidence="25">
    <location>
        <position position="35"/>
    </location>
</feature>
<feature type="modified residue" description="N6-crotonyllysine; alternate" evidence="21">
    <location>
        <position position="35"/>
    </location>
</feature>
<feature type="modified residue" description="N6-glutaryllysine; alternate" evidence="27">
    <location>
        <position position="35"/>
    </location>
</feature>
<feature type="modified residue" description="N6-succinyllysine; alternate" evidence="22">
    <location>
        <position position="35"/>
    </location>
</feature>
<feature type="modified residue" description="PolyADP-ribosyl glutamic acid" evidence="7">
    <location>
        <position position="36"/>
    </location>
</feature>
<feature type="modified residue" description="Phosphoserine; by AMPK" evidence="8">
    <location>
        <position position="37"/>
    </location>
</feature>
<feature type="modified residue" description="N6-(2-hydroxyisobutyryl)lysine; alternate" evidence="23">
    <location>
        <position position="44"/>
    </location>
</feature>
<feature type="modified residue" description="N6-glutaryllysine; alternate" evidence="27">
    <location>
        <position position="44"/>
    </location>
</feature>
<feature type="modified residue" description="N6-lactoyllysine; alternate" evidence="28">
    <location>
        <position position="44"/>
    </location>
</feature>
<feature type="modified residue" description="N6-(2-hydroxyisobutyryl)lysine; alternate" evidence="23">
    <location>
        <position position="47"/>
    </location>
</feature>
<feature type="modified residue" description="N6-glutaryllysine; alternate" evidence="27">
    <location>
        <position position="47"/>
    </location>
</feature>
<feature type="modified residue" description="N6-methyllysine; alternate" evidence="18">
    <location>
        <position position="47"/>
    </location>
</feature>
<feature type="modified residue" description="N6,N6-dimethyllysine; alternate" evidence="18">
    <location>
        <position position="58"/>
    </location>
</feature>
<feature type="modified residue" description="N6-(2-hydroxyisobutyryl)lysine; alternate" evidence="23">
    <location>
        <position position="58"/>
    </location>
</feature>
<feature type="modified residue" description="Dimethylated arginine" evidence="10">
    <location>
        <position position="80"/>
    </location>
</feature>
<feature type="modified residue" description="N6,N6,N6-trimethyllysine; alternate" evidence="10">
    <location>
        <position position="86"/>
    </location>
</feature>
<feature type="modified residue" description="N6-(2-hydroxyisobutyryl)lysine; alternate" evidence="23">
    <location>
        <position position="86"/>
    </location>
</feature>
<feature type="modified residue" description="N6-(beta-hydroxybutyryl)lysine; alternate" evidence="25">
    <location>
        <position position="86"/>
    </location>
</feature>
<feature type="modified residue" description="N6-acetyllysine; alternate" evidence="10">
    <location>
        <position position="86"/>
    </location>
</feature>
<feature type="modified residue" description="N6-lactoyllysine; alternate" evidence="28">
    <location>
        <position position="86"/>
    </location>
</feature>
<feature type="modified residue" description="Omega-N-methylarginine" evidence="10">
    <location>
        <position position="87"/>
    </location>
</feature>
<feature type="modified residue" description="Omega-N-methylarginine" evidence="10">
    <location>
        <position position="93"/>
    </location>
</feature>
<feature type="modified residue" description="N6-(2-hydroxyisobutyryl)lysine; alternate" evidence="23">
    <location>
        <position position="109"/>
    </location>
</feature>
<feature type="modified residue" description="N6-glutaryllysine; alternate" evidence="27">
    <location>
        <position position="109"/>
    </location>
</feature>
<feature type="modified residue" description="N6-lactoyllysine; alternate" evidence="28">
    <location>
        <position position="109"/>
    </location>
</feature>
<feature type="modified residue" description="N6-methyllysine; alternate" evidence="18">
    <location>
        <position position="109"/>
    </location>
</feature>
<feature type="modified residue" description="Phosphothreonine" evidence="5">
    <location>
        <position position="116"/>
    </location>
</feature>
<feature type="modified residue" description="N6-(2-hydroxyisobutyryl)lysine; alternate" evidence="23">
    <location>
        <position position="117"/>
    </location>
</feature>
<feature type="modified residue" description="N6-(beta-hydroxybutyryl)lysine; alternate" evidence="25">
    <location>
        <position position="117"/>
    </location>
</feature>
<feature type="modified residue" description="N6-glutaryllysine; alternate" evidence="27">
    <location>
        <position position="117"/>
    </location>
</feature>
<feature type="modified residue" description="N6-lactoyllysine; alternate" evidence="28">
    <location>
        <position position="117"/>
    </location>
</feature>
<feature type="modified residue" description="N6-malonyllysine; alternate" evidence="22">
    <location>
        <position position="117"/>
    </location>
</feature>
<feature type="modified residue" description="N6-methylated lysine; alternate" evidence="5">
    <location>
        <position position="117"/>
    </location>
</feature>
<feature type="modified residue" description="N6-succinyllysine; alternate" evidence="22">
    <location>
        <position position="117"/>
    </location>
</feature>
<feature type="modified residue" description="N6-(2-hydroxyisobutyryl)lysine; alternate" evidence="23">
    <location>
        <position position="121"/>
    </location>
</feature>
<feature type="modified residue" description="N6-(beta-hydroxybutyryl)lysine; alternate" evidence="25">
    <location>
        <position position="121"/>
    </location>
</feature>
<feature type="modified residue" description="N6-glutaryllysine; alternate" evidence="27">
    <location>
        <position position="121"/>
    </location>
</feature>
<feature type="modified residue" description="N6-lactoyllysine; alternate" evidence="28">
    <location>
        <position position="121"/>
    </location>
</feature>
<feature type="modified residue" description="N6-succinyllysine; alternate" evidence="22">
    <location>
        <position position="121"/>
    </location>
</feature>
<feature type="glycosylation site" description="O-linked (GlcNAc) serine" evidence="4">
    <location>
        <position position="113"/>
    </location>
</feature>
<feature type="cross-link" description="Glycyl lysine isopeptide (Lys-Gly) (interchain with G-Cter in SUMO2); alternate" evidence="3">
    <location>
        <position position="6"/>
    </location>
</feature>
<feature type="cross-link" description="Glycyl lysine isopeptide (Lys-Gly) (interchain with G-Cter in SUMO2); alternate" evidence="6">
    <location>
        <position position="21"/>
    </location>
</feature>
<feature type="cross-link" description="Glycyl lysine isopeptide (Lys-Gly) (interchain with G-Cter in ubiquitin); alternate" evidence="20">
    <location>
        <position position="35"/>
    </location>
</feature>
<feature type="cross-link" description="Glycyl lysine isopeptide (Lys-Gly) (interchain with G-Cter in ubiquitin); alternate" evidence="17 18 19">
    <location>
        <position position="121"/>
    </location>
</feature>
<feature type="sequence conflict" description="In Ref. 7; AAH98112/AAH98289." evidence="31" ref="7">
    <original>A</original>
    <variation>S</variation>
    <location>
        <position position="5"/>
    </location>
</feature>
<feature type="helix" evidence="35">
    <location>
        <begin position="39"/>
        <end position="49"/>
    </location>
</feature>
<feature type="strand" evidence="34">
    <location>
        <begin position="50"/>
        <end position="52"/>
    </location>
</feature>
<feature type="strand" evidence="33">
    <location>
        <begin position="54"/>
        <end position="56"/>
    </location>
</feature>
<feature type="helix" evidence="35">
    <location>
        <begin position="57"/>
        <end position="84"/>
    </location>
</feature>
<feature type="strand" evidence="35">
    <location>
        <begin position="88"/>
        <end position="90"/>
    </location>
</feature>
<feature type="helix" evidence="35">
    <location>
        <begin position="92"/>
        <end position="102"/>
    </location>
</feature>
<feature type="helix" evidence="35">
    <location>
        <begin position="105"/>
        <end position="123"/>
    </location>
</feature>
<reference key="1">
    <citation type="journal article" date="1992" name="J. Cell. Biochem.">
        <title>A human histone H2B.1 variant gene, located on chromosome 1, utilizes alternative 3' end processing.</title>
        <authorList>
            <person name="Collart D."/>
            <person name="Romain P.L."/>
            <person name="Huebner K."/>
            <person name="Pockwinse S."/>
            <person name="Pilapil S."/>
            <person name="Cannizzaro L.A."/>
            <person name="Lian J.B."/>
            <person name="Croce C.M."/>
            <person name="Stein J.L."/>
            <person name="Stein G.S."/>
        </authorList>
    </citation>
    <scope>NUCLEOTIDE SEQUENCE [GENOMIC DNA]</scope>
    <source>
        <tissue>Lymphocyte</tissue>
    </source>
</reference>
<reference key="2">
    <citation type="journal article" date="2002" name="Genomics">
        <title>The human and mouse replication-dependent histone genes.</title>
        <authorList>
            <person name="Marzluff W.F."/>
            <person name="Gongidi P."/>
            <person name="Woods K.R."/>
            <person name="Jin J."/>
            <person name="Maltais L.J."/>
        </authorList>
    </citation>
    <scope>NUCLEOTIDE SEQUENCE [GENOMIC DNA]</scope>
</reference>
<reference key="3">
    <citation type="submission" date="2004-06" db="EMBL/GenBank/DDBJ databases">
        <title>Cloning of human full open reading frames in Gateway(TM) system entry vector (pDONR201).</title>
        <authorList>
            <person name="Ebert L."/>
            <person name="Schick M."/>
            <person name="Neubert P."/>
            <person name="Schatten R."/>
            <person name="Henze S."/>
            <person name="Korn B."/>
        </authorList>
    </citation>
    <scope>NUCLEOTIDE SEQUENCE [LARGE SCALE MRNA]</scope>
</reference>
<reference key="4">
    <citation type="journal article" date="2004" name="Nat. Genet.">
        <title>Complete sequencing and characterization of 21,243 full-length human cDNAs.</title>
        <authorList>
            <person name="Ota T."/>
            <person name="Suzuki Y."/>
            <person name="Nishikawa T."/>
            <person name="Otsuki T."/>
            <person name="Sugiyama T."/>
            <person name="Irie R."/>
            <person name="Wakamatsu A."/>
            <person name="Hayashi K."/>
            <person name="Sato H."/>
            <person name="Nagai K."/>
            <person name="Kimura K."/>
            <person name="Makita H."/>
            <person name="Sekine M."/>
            <person name="Obayashi M."/>
            <person name="Nishi T."/>
            <person name="Shibahara T."/>
            <person name="Tanaka T."/>
            <person name="Ishii S."/>
            <person name="Yamamoto J."/>
            <person name="Saito K."/>
            <person name="Kawai Y."/>
            <person name="Isono Y."/>
            <person name="Nakamura Y."/>
            <person name="Nagahari K."/>
            <person name="Murakami K."/>
            <person name="Yasuda T."/>
            <person name="Iwayanagi T."/>
            <person name="Wagatsuma M."/>
            <person name="Shiratori A."/>
            <person name="Sudo H."/>
            <person name="Hosoiri T."/>
            <person name="Kaku Y."/>
            <person name="Kodaira H."/>
            <person name="Kondo H."/>
            <person name="Sugawara M."/>
            <person name="Takahashi M."/>
            <person name="Kanda K."/>
            <person name="Yokoi T."/>
            <person name="Furuya T."/>
            <person name="Kikkawa E."/>
            <person name="Omura Y."/>
            <person name="Abe K."/>
            <person name="Kamihara K."/>
            <person name="Katsuta N."/>
            <person name="Sato K."/>
            <person name="Tanikawa M."/>
            <person name="Yamazaki M."/>
            <person name="Ninomiya K."/>
            <person name="Ishibashi T."/>
            <person name="Yamashita H."/>
            <person name="Murakawa K."/>
            <person name="Fujimori K."/>
            <person name="Tanai H."/>
            <person name="Kimata M."/>
            <person name="Watanabe M."/>
            <person name="Hiraoka S."/>
            <person name="Chiba Y."/>
            <person name="Ishida S."/>
            <person name="Ono Y."/>
            <person name="Takiguchi S."/>
            <person name="Watanabe S."/>
            <person name="Yosida M."/>
            <person name="Hotuta T."/>
            <person name="Kusano J."/>
            <person name="Kanehori K."/>
            <person name="Takahashi-Fujii A."/>
            <person name="Hara H."/>
            <person name="Tanase T.-O."/>
            <person name="Nomura Y."/>
            <person name="Togiya S."/>
            <person name="Komai F."/>
            <person name="Hara R."/>
            <person name="Takeuchi K."/>
            <person name="Arita M."/>
            <person name="Imose N."/>
            <person name="Musashino K."/>
            <person name="Yuuki H."/>
            <person name="Oshima A."/>
            <person name="Sasaki N."/>
            <person name="Aotsuka S."/>
            <person name="Yoshikawa Y."/>
            <person name="Matsunawa H."/>
            <person name="Ichihara T."/>
            <person name="Shiohata N."/>
            <person name="Sano S."/>
            <person name="Moriya S."/>
            <person name="Momiyama H."/>
            <person name="Satoh N."/>
            <person name="Takami S."/>
            <person name="Terashima Y."/>
            <person name="Suzuki O."/>
            <person name="Nakagawa S."/>
            <person name="Senoh A."/>
            <person name="Mizoguchi H."/>
            <person name="Goto Y."/>
            <person name="Shimizu F."/>
            <person name="Wakebe H."/>
            <person name="Hishigaki H."/>
            <person name="Watanabe T."/>
            <person name="Sugiyama A."/>
            <person name="Takemoto M."/>
            <person name="Kawakami B."/>
            <person name="Yamazaki M."/>
            <person name="Watanabe K."/>
            <person name="Kumagai A."/>
            <person name="Itakura S."/>
            <person name="Fukuzumi Y."/>
            <person name="Fujimori Y."/>
            <person name="Komiyama M."/>
            <person name="Tashiro H."/>
            <person name="Tanigami A."/>
            <person name="Fujiwara T."/>
            <person name="Ono T."/>
            <person name="Yamada K."/>
            <person name="Fujii Y."/>
            <person name="Ozaki K."/>
            <person name="Hirao M."/>
            <person name="Ohmori Y."/>
            <person name="Kawabata A."/>
            <person name="Hikiji T."/>
            <person name="Kobatake N."/>
            <person name="Inagaki H."/>
            <person name="Ikema Y."/>
            <person name="Okamoto S."/>
            <person name="Okitani R."/>
            <person name="Kawakami T."/>
            <person name="Noguchi S."/>
            <person name="Itoh T."/>
            <person name="Shigeta K."/>
            <person name="Senba T."/>
            <person name="Matsumura K."/>
            <person name="Nakajima Y."/>
            <person name="Mizuno T."/>
            <person name="Morinaga M."/>
            <person name="Sasaki M."/>
            <person name="Togashi T."/>
            <person name="Oyama M."/>
            <person name="Hata H."/>
            <person name="Watanabe M."/>
            <person name="Komatsu T."/>
            <person name="Mizushima-Sugano J."/>
            <person name="Satoh T."/>
            <person name="Shirai Y."/>
            <person name="Takahashi Y."/>
            <person name="Nakagawa K."/>
            <person name="Okumura K."/>
            <person name="Nagase T."/>
            <person name="Nomura N."/>
            <person name="Kikuchi H."/>
            <person name="Masuho Y."/>
            <person name="Yamashita R."/>
            <person name="Nakai K."/>
            <person name="Yada T."/>
            <person name="Nakamura Y."/>
            <person name="Ohara O."/>
            <person name="Isogai T."/>
            <person name="Sugano S."/>
        </authorList>
    </citation>
    <scope>NUCLEOTIDE SEQUENCE [LARGE SCALE MRNA]</scope>
    <source>
        <tissue>Brain</tissue>
    </source>
</reference>
<reference key="5">
    <citation type="journal article" date="2006" name="Nature">
        <title>The DNA sequence and biological annotation of human chromosome 1.</title>
        <authorList>
            <person name="Gregory S.G."/>
            <person name="Barlow K.F."/>
            <person name="McLay K.E."/>
            <person name="Kaul R."/>
            <person name="Swarbreck D."/>
            <person name="Dunham A."/>
            <person name="Scott C.E."/>
            <person name="Howe K.L."/>
            <person name="Woodfine K."/>
            <person name="Spencer C.C.A."/>
            <person name="Jones M.C."/>
            <person name="Gillson C."/>
            <person name="Searle S."/>
            <person name="Zhou Y."/>
            <person name="Kokocinski F."/>
            <person name="McDonald L."/>
            <person name="Evans R."/>
            <person name="Phillips K."/>
            <person name="Atkinson A."/>
            <person name="Cooper R."/>
            <person name="Jones C."/>
            <person name="Hall R.E."/>
            <person name="Andrews T.D."/>
            <person name="Lloyd C."/>
            <person name="Ainscough R."/>
            <person name="Almeida J.P."/>
            <person name="Ambrose K.D."/>
            <person name="Anderson F."/>
            <person name="Andrew R.W."/>
            <person name="Ashwell R.I.S."/>
            <person name="Aubin K."/>
            <person name="Babbage A.K."/>
            <person name="Bagguley C.L."/>
            <person name="Bailey J."/>
            <person name="Beasley H."/>
            <person name="Bethel G."/>
            <person name="Bird C.P."/>
            <person name="Bray-Allen S."/>
            <person name="Brown J.Y."/>
            <person name="Brown A.J."/>
            <person name="Buckley D."/>
            <person name="Burton J."/>
            <person name="Bye J."/>
            <person name="Carder C."/>
            <person name="Chapman J.C."/>
            <person name="Clark S.Y."/>
            <person name="Clarke G."/>
            <person name="Clee C."/>
            <person name="Cobley V."/>
            <person name="Collier R.E."/>
            <person name="Corby N."/>
            <person name="Coville G.J."/>
            <person name="Davies J."/>
            <person name="Deadman R."/>
            <person name="Dunn M."/>
            <person name="Earthrowl M."/>
            <person name="Ellington A.G."/>
            <person name="Errington H."/>
            <person name="Frankish A."/>
            <person name="Frankland J."/>
            <person name="French L."/>
            <person name="Garner P."/>
            <person name="Garnett J."/>
            <person name="Gay L."/>
            <person name="Ghori M.R.J."/>
            <person name="Gibson R."/>
            <person name="Gilby L.M."/>
            <person name="Gillett W."/>
            <person name="Glithero R.J."/>
            <person name="Grafham D.V."/>
            <person name="Griffiths C."/>
            <person name="Griffiths-Jones S."/>
            <person name="Grocock R."/>
            <person name="Hammond S."/>
            <person name="Harrison E.S.I."/>
            <person name="Hart E."/>
            <person name="Haugen E."/>
            <person name="Heath P.D."/>
            <person name="Holmes S."/>
            <person name="Holt K."/>
            <person name="Howden P.J."/>
            <person name="Hunt A.R."/>
            <person name="Hunt S.E."/>
            <person name="Hunter G."/>
            <person name="Isherwood J."/>
            <person name="James R."/>
            <person name="Johnson C."/>
            <person name="Johnson D."/>
            <person name="Joy A."/>
            <person name="Kay M."/>
            <person name="Kershaw J.K."/>
            <person name="Kibukawa M."/>
            <person name="Kimberley A.M."/>
            <person name="King A."/>
            <person name="Knights A.J."/>
            <person name="Lad H."/>
            <person name="Laird G."/>
            <person name="Lawlor S."/>
            <person name="Leongamornlert D.A."/>
            <person name="Lloyd D.M."/>
            <person name="Loveland J."/>
            <person name="Lovell J."/>
            <person name="Lush M.J."/>
            <person name="Lyne R."/>
            <person name="Martin S."/>
            <person name="Mashreghi-Mohammadi M."/>
            <person name="Matthews L."/>
            <person name="Matthews N.S.W."/>
            <person name="McLaren S."/>
            <person name="Milne S."/>
            <person name="Mistry S."/>
            <person name="Moore M.J.F."/>
            <person name="Nickerson T."/>
            <person name="O'Dell C.N."/>
            <person name="Oliver K."/>
            <person name="Palmeiri A."/>
            <person name="Palmer S.A."/>
            <person name="Parker A."/>
            <person name="Patel D."/>
            <person name="Pearce A.V."/>
            <person name="Peck A.I."/>
            <person name="Pelan S."/>
            <person name="Phelps K."/>
            <person name="Phillimore B.J."/>
            <person name="Plumb R."/>
            <person name="Rajan J."/>
            <person name="Raymond C."/>
            <person name="Rouse G."/>
            <person name="Saenphimmachak C."/>
            <person name="Sehra H.K."/>
            <person name="Sheridan E."/>
            <person name="Shownkeen R."/>
            <person name="Sims S."/>
            <person name="Skuce C.D."/>
            <person name="Smith M."/>
            <person name="Steward C."/>
            <person name="Subramanian S."/>
            <person name="Sycamore N."/>
            <person name="Tracey A."/>
            <person name="Tromans A."/>
            <person name="Van Helmond Z."/>
            <person name="Wall M."/>
            <person name="Wallis J.M."/>
            <person name="White S."/>
            <person name="Whitehead S.L."/>
            <person name="Wilkinson J.E."/>
            <person name="Willey D.L."/>
            <person name="Williams H."/>
            <person name="Wilming L."/>
            <person name="Wray P.W."/>
            <person name="Wu Z."/>
            <person name="Coulson A."/>
            <person name="Vaudin M."/>
            <person name="Sulston J.E."/>
            <person name="Durbin R.M."/>
            <person name="Hubbard T."/>
            <person name="Wooster R."/>
            <person name="Dunham I."/>
            <person name="Carter N.P."/>
            <person name="McVean G."/>
            <person name="Ross M.T."/>
            <person name="Harrow J."/>
            <person name="Olson M.V."/>
            <person name="Beck S."/>
            <person name="Rogers J."/>
            <person name="Bentley D.R."/>
        </authorList>
    </citation>
    <scope>NUCLEOTIDE SEQUENCE [LARGE SCALE GENOMIC DNA]</scope>
</reference>
<reference key="6">
    <citation type="submission" date="2005-09" db="EMBL/GenBank/DDBJ databases">
        <authorList>
            <person name="Mural R.J."/>
            <person name="Istrail S."/>
            <person name="Sutton G.G."/>
            <person name="Florea L."/>
            <person name="Halpern A.L."/>
            <person name="Mobarry C.M."/>
            <person name="Lippert R."/>
            <person name="Walenz B."/>
            <person name="Shatkay H."/>
            <person name="Dew I."/>
            <person name="Miller J.R."/>
            <person name="Flanigan M.J."/>
            <person name="Edwards N.J."/>
            <person name="Bolanos R."/>
            <person name="Fasulo D."/>
            <person name="Halldorsson B.V."/>
            <person name="Hannenhalli S."/>
            <person name="Turner R."/>
            <person name="Yooseph S."/>
            <person name="Lu F."/>
            <person name="Nusskern D.R."/>
            <person name="Shue B.C."/>
            <person name="Zheng X.H."/>
            <person name="Zhong F."/>
            <person name="Delcher A.L."/>
            <person name="Huson D.H."/>
            <person name="Kravitz S.A."/>
            <person name="Mouchard L."/>
            <person name="Reinert K."/>
            <person name="Remington K.A."/>
            <person name="Clark A.G."/>
            <person name="Waterman M.S."/>
            <person name="Eichler E.E."/>
            <person name="Adams M.D."/>
            <person name="Hunkapiller M.W."/>
            <person name="Myers E.W."/>
            <person name="Venter J.C."/>
        </authorList>
    </citation>
    <scope>NUCLEOTIDE SEQUENCE [LARGE SCALE GENOMIC DNA]</scope>
</reference>
<reference key="7">
    <citation type="journal article" date="2004" name="Genome Res.">
        <title>The status, quality, and expansion of the NIH full-length cDNA project: the Mammalian Gene Collection (MGC).</title>
        <authorList>
            <consortium name="The MGC Project Team"/>
        </authorList>
    </citation>
    <scope>NUCLEOTIDE SEQUENCE [LARGE SCALE MRNA]</scope>
    <source>
        <tissue>Lung</tissue>
        <tissue>Ovary</tissue>
    </source>
</reference>
<reference key="8">
    <citation type="journal article" date="2002" name="J. Immunol.">
        <title>Endotoxin-neutralizing antimicrobial proteins of the human placenta.</title>
        <authorList>
            <person name="Kim H.S."/>
            <person name="Cho J.H."/>
            <person name="Park H.W."/>
            <person name="Yoon H."/>
            <person name="Kim M.S."/>
            <person name="Kim S.C."/>
        </authorList>
    </citation>
    <scope>PROTEIN SEQUENCE OF 2-21</scope>
    <scope>FUNCTION</scope>
</reference>
<reference key="9">
    <citation type="journal article" date="1996" name="Eur. J. Biochem.">
        <title>Biochemical and antibacterial analysis of human wound and blister fluid.</title>
        <authorList>
            <person name="Frohm M."/>
            <person name="Gunne H."/>
            <person name="Bergman A.-C."/>
            <person name="Agerberth B."/>
            <person name="Bergman T."/>
            <person name="Boman A."/>
            <person name="Liden S."/>
            <person name="Joernvall H."/>
            <person name="Boman H.G."/>
        </authorList>
    </citation>
    <scope>PROTEIN SEQUENCE OF 2-13</scope>
</reference>
<reference key="10">
    <citation type="journal article" date="2003" name="Peptides">
        <title>Antimicrobial peptides in the first line defence of human colon mucosa.</title>
        <authorList>
            <person name="Tollin M."/>
            <person name="Bergman P."/>
            <person name="Svenberg T."/>
            <person name="Joernvall H."/>
            <person name="Gudmundsson G.H."/>
            <person name="Agerberth B."/>
        </authorList>
    </citation>
    <scope>PROTEIN SEQUENCE OF 2-13</scope>
    <scope>FUNCTION</scope>
</reference>
<reference key="11">
    <citation type="journal article" date="2003" name="Peptides">
        <title>Antimicrobial polypeptides of the human colonic epithelium.</title>
        <authorList>
            <person name="Howell S.J."/>
            <person name="Wilk D."/>
            <person name="Yadav S.P."/>
            <person name="Bevins C.L."/>
        </authorList>
    </citation>
    <scope>PROTEIN SEQUENCE OF 2-13</scope>
    <scope>FUNCTION</scope>
</reference>
<reference key="12">
    <citation type="journal article" date="2006" name="Mol. Cell. Proteomics">
        <title>Quantitative proteomic analysis of post-translational modifications of human histones.</title>
        <authorList>
            <person name="Beck H.C."/>
            <person name="Nielsen E.C."/>
            <person name="Matthiesen R."/>
            <person name="Jensen L.H."/>
            <person name="Sehested M."/>
            <person name="Finn P."/>
            <person name="Grauslund M."/>
            <person name="Hansen A.M."/>
            <person name="Jensen O.N."/>
        </authorList>
    </citation>
    <scope>PROTEIN SEQUENCE OF 7-24</scope>
    <scope>ACETYLATION AT LYS-6; LYS-12; LYS-13; LYS-16; LYS-17 AND LYS-21</scope>
    <scope>METHYLATION AT LYS-47; LYS-58 AND LYS-109</scope>
    <scope>UBIQUITINATION AT LYS-121</scope>
    <scope>IDENTIFICATION BY MASS SPECTROMETRY</scope>
</reference>
<reference key="13">
    <citation type="journal article" date="1991" name="Biochemistry">
        <title>Isolation and characterization of a cDNA from a human histone H2B gene which is reciprocally expressed in relation to replication-dependent H2B histone genes during HL60 cell differentiation.</title>
        <authorList>
            <person name="Collart D."/>
            <person name="Ramsey-Ewing A."/>
            <person name="Bortell R."/>
            <person name="Lian J."/>
            <person name="Stein J."/>
            <person name="Stein G."/>
        </authorList>
    </citation>
    <scope>NUCLEOTIDE SEQUENCE [MRNA] OF 26-126</scope>
    <source>
        <tissue>Liver</tissue>
    </source>
</reference>
<reference key="14">
    <citation type="journal article" date="2003" name="Cell">
        <title>Apoptotic phosphorylation of histone H2B is mediated by mammalian sterile twenty kinase.</title>
        <authorList>
            <person name="Cheung W.L."/>
            <person name="Ajiro K."/>
            <person name="Samejima K."/>
            <person name="Kloc M."/>
            <person name="Cheung P."/>
            <person name="Mizzen C.A."/>
            <person name="Beeser A."/>
            <person name="Etkin L.D."/>
            <person name="Chernoff J."/>
            <person name="Earnshaw W.C."/>
            <person name="Allis C.D."/>
        </authorList>
    </citation>
    <scope>PHOSPHORYLATION AT SER-15</scope>
</reference>
<reference key="15">
    <citation type="journal article" date="2005" name="Mol. Cell">
        <title>Monoubiquitination of human histone H2B: the factors involved and their roles in HOX gene regulation.</title>
        <authorList>
            <person name="Zhu B."/>
            <person name="Zheng Y."/>
            <person name="Pham A.-D."/>
            <person name="Mandal S.S."/>
            <person name="Erdjument-Bromage H."/>
            <person name="Tempst P."/>
            <person name="Reinberg D."/>
        </authorList>
    </citation>
    <scope>UBIQUITINATION AT LYS-121</scope>
</reference>
<reference key="16">
    <citation type="journal article" date="2005" name="Mol. Cell. Biochem.">
        <title>Inhibition of core histones acetylation by carcinogenic nickel(II).</title>
        <authorList>
            <person name="Golebiowski F."/>
            <person name="Kasprzak K.S."/>
        </authorList>
    </citation>
    <scope>ACETYLATION AT LYS-6; LYS-13; LYS-16 AND LYS-21</scope>
</reference>
<reference key="17">
    <citation type="journal article" date="2006" name="Cell">
        <title>Histone H2B monoubiquitination functions cooperatively with FACT to regulate elongation by RNA polymerase II.</title>
        <authorList>
            <person name="Pavri R."/>
            <person name="Zhu B."/>
            <person name="Li G."/>
            <person name="Trojer P."/>
            <person name="Mandal S."/>
            <person name="Shilatifard A."/>
            <person name="Reinberg D."/>
        </authorList>
    </citation>
    <scope>UBIQUITINATION AT LYS-121</scope>
</reference>
<reference key="18">
    <citation type="journal article" date="2006" name="J. Proteome Res.">
        <title>Gene-specific characterization of human histone H2B by electron capture dissociation.</title>
        <authorList>
            <person name="Siuti N."/>
            <person name="Roth M.J."/>
            <person name="Mizzen C.A."/>
            <person name="Kelleher N.L."/>
            <person name="Pesavento J.J."/>
        </authorList>
    </citation>
    <scope>IDENTIFICATION BY MASS SPECTROMETRY</scope>
</reference>
<reference key="19">
    <citation type="journal article" date="2011" name="Cell">
        <title>Identification of 67 histone marks and histone lysine crotonylation as a new type of histone modification.</title>
        <authorList>
            <person name="Tan M."/>
            <person name="Luo H."/>
            <person name="Lee S."/>
            <person name="Jin F."/>
            <person name="Yang J.S."/>
            <person name="Montellier E."/>
            <person name="Buchou T."/>
            <person name="Cheng Z."/>
            <person name="Rousseaux S."/>
            <person name="Rajagopal N."/>
            <person name="Lu Z."/>
            <person name="Ye Z."/>
            <person name="Zhu Q."/>
            <person name="Wysocka J."/>
            <person name="Ye Y."/>
            <person name="Khochbin S."/>
            <person name="Ren B."/>
            <person name="Zhao Y."/>
        </authorList>
    </citation>
    <scope>CROTONYLATION AT LYS-6; LYS-12; LYS-13; LYS-16; LYS-17; LYS-21; LYS-24 AND LYS-35</scope>
</reference>
<reference key="20">
    <citation type="journal article" date="2011" name="Mol. Cell">
        <title>The RING finger protein MSL2 in the MOF complex is an E3 ubiquitin ligase for H2B K34 and is involved in crosstalk with H3 K4 and K79 methylation.</title>
        <authorList>
            <person name="Wu L."/>
            <person name="Zee B.M."/>
            <person name="Wang Y."/>
            <person name="Garcia B.A."/>
            <person name="Dou Y."/>
        </authorList>
    </citation>
    <scope>UBIQUITINATION AT LYS-35</scope>
</reference>
<reference key="21">
    <citation type="journal article" date="2012" name="Mol. Cell. Proteomics">
        <title>Lysine succinylation and lysine malonylation in histones.</title>
        <authorList>
            <person name="Xie Z."/>
            <person name="Dai J."/>
            <person name="Dai L."/>
            <person name="Tan M."/>
            <person name="Cheng Z."/>
            <person name="Wu Y."/>
            <person name="Boeke J.D."/>
            <person name="Zhao Y."/>
        </authorList>
    </citation>
    <scope>SUCCINYLATION AT LYS-35; LYS-117 AND LYS-121</scope>
    <scope>MALONYLATION AT LYS-117</scope>
</reference>
<reference key="22">
    <citation type="journal article" date="2013" name="Genes Dev.">
        <title>USP49 deubiquitinates histone H2B and regulates cotranscriptional pre-mRNA splicing.</title>
        <authorList>
            <person name="Zhang Z."/>
            <person name="Jones A."/>
            <person name="Joo H.Y."/>
            <person name="Zhou D."/>
            <person name="Cao Y."/>
            <person name="Chen S."/>
            <person name="Erdjument-Bromage H."/>
            <person name="Renfrow M."/>
            <person name="He H."/>
            <person name="Tempst P."/>
            <person name="Townes T.M."/>
            <person name="Giles K.E."/>
            <person name="Ma L."/>
            <person name="Wang H."/>
        </authorList>
    </citation>
    <scope>UBIQUITINATION</scope>
    <scope>DEUBIQUITINATION BY USP49</scope>
</reference>
<reference key="23">
    <citation type="journal article" date="2014" name="Nat. Chem. Biol.">
        <title>Lysine 2-hydroxyisobutyrylation is a widely distributed active histone mark.</title>
        <authorList>
            <person name="Dai L."/>
            <person name="Peng C."/>
            <person name="Montellier E."/>
            <person name="Lu Z."/>
            <person name="Chen Y."/>
            <person name="Ishii H."/>
            <person name="Debernardi A."/>
            <person name="Buchou T."/>
            <person name="Rousseaux S."/>
            <person name="Jin F."/>
            <person name="Sabari B.R."/>
            <person name="Deng Z."/>
            <person name="Allis C.D."/>
            <person name="Ren B."/>
            <person name="Khochbin S."/>
            <person name="Zhao Y."/>
        </authorList>
    </citation>
    <scope>HYDROXYBUTYRYLATION AT LYS-6; LYS-13; LYS-21; LYS-24; LYS-25; LYS-35; LYS-44; LYS-47; LYS-58; LYS-86; LYS-109; LYS-117 AND LYS-121</scope>
</reference>
<reference key="24">
    <citation type="journal article" date="2016" name="Mol. Cell">
        <title>Dynamic competing histone H4 K5K8 acetylation and butyrylation are hallmarks of highly active gene promoters.</title>
        <authorList>
            <person name="Goudarzi A."/>
            <person name="Zhang D."/>
            <person name="Huang H."/>
            <person name="Barral S."/>
            <person name="Kwon O.K."/>
            <person name="Qi S."/>
            <person name="Tang Z."/>
            <person name="Buchou T."/>
            <person name="Vitte A.L."/>
            <person name="He T."/>
            <person name="Cheng Z."/>
            <person name="Montellier E."/>
            <person name="Gaucher J."/>
            <person name="Curtet S."/>
            <person name="Debernardi A."/>
            <person name="Charbonnier G."/>
            <person name="Puthier D."/>
            <person name="Petosa C."/>
            <person name="Panne D."/>
            <person name="Rousseaux S."/>
            <person name="Roeder R.G."/>
            <person name="Zhao Y."/>
            <person name="Khochbin S."/>
        </authorList>
    </citation>
    <scope>BUTYRYLATION AT LYS-6 AND LYS-21</scope>
</reference>
<reference key="25">
    <citation type="journal article" date="2016" name="Mol. Cell">
        <title>Metabolic regulation of gene expression by histone lysine beta-hydroxybutyrylation.</title>
        <authorList>
            <person name="Xie Z."/>
            <person name="Zhang D."/>
            <person name="Chung D."/>
            <person name="Tang Z."/>
            <person name="Huang H."/>
            <person name="Dai L."/>
            <person name="Qi S."/>
            <person name="Li J."/>
            <person name="Colak G."/>
            <person name="Chen Y."/>
            <person name="Xia C."/>
            <person name="Peng C."/>
            <person name="Ruan H."/>
            <person name="Kirkey M."/>
            <person name="Wang D."/>
            <person name="Jensen L.M."/>
            <person name="Kwon O.K."/>
            <person name="Lee S."/>
            <person name="Pletcher S.D."/>
            <person name="Tan M."/>
            <person name="Lombard D.B."/>
            <person name="White K.P."/>
            <person name="Zhao H."/>
            <person name="Li J."/>
            <person name="Roeder R.G."/>
            <person name="Yang X."/>
            <person name="Zhao Y."/>
        </authorList>
    </citation>
    <scope>HYDROXYBUTYRYLATION AT LYS-6; LYS-12; LYS-17; LYS-21; LYS-35; LYS-86; LYS-117 AND LYS-121</scope>
</reference>
<reference key="26">
    <citation type="journal article" date="2016" name="Nat. Commun.">
        <title>PARP3 is a sensor of nicked nucleosomes and monoribosylates histone H2B(Glu2).</title>
        <authorList>
            <person name="Grundy G.J."/>
            <person name="Polo L.M."/>
            <person name="Zeng Z."/>
            <person name="Rulten S.L."/>
            <person name="Hoch N.C."/>
            <person name="Paomephan P."/>
            <person name="Xu Y."/>
            <person name="Sweet S.M."/>
            <person name="Thorne A.W."/>
            <person name="Oliver A.W."/>
            <person name="Matthews S.J."/>
            <person name="Pearl L.H."/>
            <person name="Caldecott K.W."/>
        </authorList>
    </citation>
    <scope>ADP-RIBOSYLATION AT GLU-3</scope>
</reference>
<reference key="27">
    <citation type="journal article" date="2019" name="Mol. Cell">
        <title>Glutarylation of histone H4 lysine 91 regulates chromatin dynamics.</title>
        <authorList>
            <person name="Bao X."/>
            <person name="Liu Z."/>
            <person name="Zhang W."/>
            <person name="Gladysz K."/>
            <person name="Fung Y.M.E."/>
            <person name="Tian G."/>
            <person name="Xiong Y."/>
            <person name="Wong J.W.H."/>
            <person name="Yuen K.W.Y."/>
            <person name="Li X.D."/>
        </authorList>
    </citation>
    <scope>GLUTARYLATION AT LYS-17; LYS-35; LYS-44; LYS-47; LYS-109; LYS-117 AND LYS-121</scope>
</reference>
<reference key="28">
    <citation type="journal article" date="2019" name="Nature">
        <title>Metabolic regulation of gene expression by histone lactylation.</title>
        <authorList>
            <person name="Zhang D."/>
            <person name="Tang Z."/>
            <person name="Huang H."/>
            <person name="Zhou G."/>
            <person name="Cui C."/>
            <person name="Weng Y."/>
            <person name="Liu W."/>
            <person name="Kim S."/>
            <person name="Lee S."/>
            <person name="Perez-Neut M."/>
            <person name="Ding J."/>
            <person name="Czyz D."/>
            <person name="Hu R."/>
            <person name="Ye Z."/>
            <person name="He M."/>
            <person name="Zheng Y.G."/>
            <person name="Shuman H.A."/>
            <person name="Dai L."/>
            <person name="Ren B."/>
            <person name="Roeder R.G."/>
            <person name="Becker L."/>
            <person name="Zhao Y."/>
        </authorList>
    </citation>
    <scope>LACTYLATION AT LYS-6; LYS-12; LYS-16; LYS-17; LYS-21; LYS-24; LYS-44; LYS-86; LYS-109; LYS-117 AND LYS-121</scope>
</reference>
<reference key="29">
    <citation type="journal article" date="2021" name="Elife">
        <title>Serine ADP-ribosylation marks nucleosomes for ALC1-dependent chromatin remodeling.</title>
        <authorList>
            <person name="Mohapatra J."/>
            <person name="Tashiro K."/>
            <person name="Beckner R.L."/>
            <person name="Sierra J."/>
            <person name="Kilgore J.A."/>
            <person name="Williams N.S."/>
            <person name="Liszczak G."/>
        </authorList>
    </citation>
    <scope>ADP-RIBOSYLATION AT SER-7</scope>
</reference>
<proteinExistence type="evidence at protein level"/>
<comment type="function">
    <text>Core component of nucleosome. Nucleosomes wrap and compact DNA into chromatin, limiting DNA accessibility to the cellular machineries which require DNA as a template. Histones thereby play a central role in transcription regulation, DNA repair, DNA replication and chromosomal stability. DNA accessibility is regulated via a complex set of post-translational modifications of histones, also called histone code, and nucleosome remodeling.</text>
</comment>
<comment type="function">
    <text>Has broad antibacterial activity. May contribute to the formation of the functional antimicrobial barrier of the colonic epithelium, and to the bactericidal activity of amniotic fluid.</text>
</comment>
<comment type="subunit">
    <text>The nucleosome is a histone octamer containing two molecules each of H2A, H2B, H3 and H4 assembled in one H3-H4 heterotetramer and two H2A-H2B heterodimers. The octamer wraps approximately 147 bp of DNA.</text>
</comment>
<comment type="interaction">
    <interactant intactId="EBI-1056125">
        <id>Q16778</id>
    </interactant>
    <interactant intactId="EBI-297683">
        <id>Q96CW1</id>
        <label>AP2M1</label>
    </interactant>
    <organismsDiffer>false</organismsDiffer>
    <experiments>3</experiments>
</comment>
<comment type="interaction">
    <interactant intactId="EBI-1056125">
        <id>Q16778</id>
    </interactant>
    <interactant intactId="EBI-725224">
        <id>P07305</id>
        <label>H1-0</label>
    </interactant>
    <organismsDiffer>false</organismsDiffer>
    <experiments>3</experiments>
</comment>
<comment type="interaction">
    <interactant intactId="EBI-1056125">
        <id>Q16778</id>
    </interactant>
    <interactant intactId="EBI-358372">
        <id>P16403</id>
        <label>H1-2</label>
    </interactant>
    <organismsDiffer>false</organismsDiffer>
    <experiments>2</experiments>
</comment>
<comment type="interaction">
    <interactant intactId="EBI-1056125">
        <id>Q16778</id>
    </interactant>
    <interactant intactId="EBI-358163">
        <id>P10412</id>
        <label>H1-4</label>
    </interactant>
    <organismsDiffer>false</organismsDiffer>
    <experiments>2</experiments>
</comment>
<comment type="interaction">
    <interactant intactId="EBI-1056125">
        <id>Q16778</id>
    </interactant>
    <interactant intactId="EBI-6147676">
        <id>Q99878</id>
        <label>H2AC14</label>
    </interactant>
    <organismsDiffer>false</organismsDiffer>
    <experiments>2</experiments>
</comment>
<comment type="interaction">
    <interactant intactId="EBI-1056125">
        <id>Q16778</id>
    </interactant>
    <interactant intactId="EBI-1199859">
        <id>P0C0S5</id>
        <label>H2AZ1</label>
    </interactant>
    <organismsDiffer>false</organismsDiffer>
    <experiments>3</experiments>
</comment>
<comment type="interaction">
    <interactant intactId="EBI-1056125">
        <id>Q16778</id>
    </interactant>
    <interactant intactId="EBI-750650">
        <id>Q71DI3</id>
        <label>H3C15</label>
    </interactant>
    <organismsDiffer>false</organismsDiffer>
    <experiments>2</experiments>
</comment>
<comment type="interaction">
    <interactant intactId="EBI-1056125">
        <id>Q16778</id>
    </interactant>
    <interactant intactId="EBI-302023">
        <id>P62805</id>
        <label>H4C9</label>
    </interactant>
    <organismsDiffer>false</organismsDiffer>
    <experiments>2</experiments>
</comment>
<comment type="interaction">
    <interactant intactId="EBI-1056125">
        <id>Q16778</id>
    </interactant>
    <interactant intactId="EBI-746843">
        <id>P17096</id>
        <label>HMGA1</label>
    </interactant>
    <organismsDiffer>false</organismsDiffer>
    <experiments>2</experiments>
</comment>
<comment type="interaction">
    <interactant intactId="EBI-1056125">
        <id>Q16778</id>
    </interactant>
    <interactant intactId="EBI-307907">
        <id>Q9NQS7</id>
        <label>INCENP</label>
    </interactant>
    <organismsDiffer>false</organismsDiffer>
    <experiments>2</experiments>
</comment>
<comment type="interaction">
    <interactant intactId="EBI-1056125">
        <id>Q16778</id>
    </interactant>
    <interactant intactId="EBI-2862434">
        <id>Q96L73</id>
        <label>NSD1</label>
    </interactant>
    <organismsDiffer>false</organismsDiffer>
    <experiments>2</experiments>
</comment>
<comment type="interaction">
    <interactant intactId="EBI-1056125">
        <id>Q16778</id>
    </interactant>
    <interactant intactId="EBI-10972034">
        <id>O75151</id>
        <label>PHF2</label>
    </interactant>
    <organismsDiffer>false</organismsDiffer>
    <experiments>2</experiments>
</comment>
<comment type="interaction">
    <interactant intactId="EBI-1056125">
        <id>Q16778</id>
    </interactant>
    <interactant intactId="EBI-538479">
        <id>Q6P2Q9</id>
        <label>PRPF8</label>
    </interactant>
    <organismsDiffer>false</organismsDiffer>
    <experiments>2</experiments>
</comment>
<comment type="interaction">
    <interactant intactId="EBI-1056125">
        <id>Q16778</id>
    </interactant>
    <interactant intactId="EBI-6597774">
        <id>Q96N64</id>
        <label>PWWP2A</label>
    </interactant>
    <organismsDiffer>false</organismsDiffer>
    <experiments>2</experiments>
</comment>
<comment type="interaction">
    <interactant intactId="EBI-1056125">
        <id>Q16778</id>
    </interactant>
    <interactant intactId="EBI-353771">
        <id>Q08945</id>
        <label>SSRP1</label>
    </interactant>
    <organismsDiffer>false</organismsDiffer>
    <experiments>3</experiments>
</comment>
<comment type="interaction">
    <interactant intactId="EBI-1056125">
        <id>Q16778</id>
    </interactant>
    <interactant intactId="EBI-2556139">
        <id>Q14202</id>
        <label>ZMYM3</label>
    </interactant>
    <organismsDiffer>false</organismsDiffer>
    <experiments>2</experiments>
</comment>
<comment type="subcellular location">
    <subcellularLocation>
        <location>Nucleus</location>
    </subcellularLocation>
    <subcellularLocation>
        <location>Chromosome</location>
    </subcellularLocation>
</comment>
<comment type="PTM">
    <text evidence="18">Monoubiquitination at Lys-35 (H2BK34Ub) by the MSL1/MSL2 dimer is required for histone H3 'Lys-4' (H3K4me) and 'Lys-79' (H3K79me) methylation and transcription activation at specific gene loci, such as HOXA9 and MEIS1 loci. Similarly, monoubiquitination at Lys-121 (H2BK120Ub) by the RNF20/40 complex gives a specific tag for epigenetic transcriptional activation and is also prerequisite for histone H3 'Lys-4' and 'Lys-79' methylation. It also functions cooperatively with the FACT dimer to stimulate elongation by RNA polymerase II. H2BK120Ub also acts as a regulator of mRNA splicing: deubiquitination by USP49 is required for efficient cotranscriptional splicing of a large set of exons.</text>
</comment>
<comment type="PTM">
    <text evidence="7 13">Phosphorylation at Ser-37 (H2BS36ph) by AMPK in response to stress promotes transcription (By similarity). Phosphorylated on Ser-15 (H2BS14ph) by STK4/MST1 during apoptosis; which facilitates apoptotic chromatin condensation (PubMed:12757711). Also phosphorylated on Ser-15 in response to DNA double strand breaks (DSBs), and in correlation with somatic hypermutation and immunoglobulin class-switch recombination.</text>
</comment>
<comment type="PTM">
    <text evidence="4">GlcNAcylation at Ser-113 promotes monoubiquitination of Lys-121. It fluctuates in response to extracellular glucose, and associates with transcribed genes (By similarity).</text>
</comment>
<comment type="PTM">
    <text evidence="9 26 29">ADP-ribosylated by PARP1 or PARP2 on Ser-7 (H2BS6ADPr) in response to DNA damage (PubMed:34874266). H2BS6ADPr promotes recruitment of CHD1L (PubMed:34874266). Mono-ADP-ribosylated on Glu-3 (H2BE2ADPr) by PARP3 in response to single-strand breaks (PubMed:27530147). Poly ADP-ribosylation on Glu-36 (H2BE35ADPr) by PARP1 regulates adipogenesis: it inhibits phosphorylation at Ser-37 (H2BS36ph), thereby blocking expression of pro-adipogenetic genes (By similarity).</text>
</comment>
<comment type="PTM">
    <text evidence="21">Crotonylation (Kcr) is specifically present in male germ cells and marks testis-specific genes in post-meiotic cells, including X-linked genes that escape sex chromosome inactivation in haploid cells. Crotonylation marks active promoters and enhancers and confers resistance to transcriptional repressors. It is also associated with post-meiotically activated genes on autosomes.</text>
</comment>
<comment type="PTM">
    <text evidence="28">Lactylated in macrophages by EP300/P300 by using lactoyl-CoA directly derived from endogenous or exogenous lactate, leading to stimulates gene transcription.</text>
</comment>
<comment type="similarity">
    <text evidence="31">Belongs to the histone H2B family.</text>
</comment>
<dbReference type="EMBL" id="X57985">
    <property type="protein sequence ID" value="CAA41051.1"/>
    <property type="molecule type" value="Genomic_DNA"/>
</dbReference>
<dbReference type="EMBL" id="AY131979">
    <property type="protein sequence ID" value="AAN59961.1"/>
    <property type="molecule type" value="Genomic_DNA"/>
</dbReference>
<dbReference type="EMBL" id="CR541895">
    <property type="protein sequence ID" value="CAG46693.1"/>
    <property type="molecule type" value="mRNA"/>
</dbReference>
<dbReference type="EMBL" id="AK289725">
    <property type="protein sequence ID" value="BAF82414.1"/>
    <property type="molecule type" value="mRNA"/>
</dbReference>
<dbReference type="EMBL" id="AL591493">
    <property type="protein sequence ID" value="CAI12568.1"/>
    <property type="molecule type" value="Genomic_DNA"/>
</dbReference>
<dbReference type="EMBL" id="CH471121">
    <property type="protein sequence ID" value="EAW53605.1"/>
    <property type="molecule type" value="Genomic_DNA"/>
</dbReference>
<dbReference type="EMBL" id="BC005827">
    <property type="protein sequence ID" value="AAH05827.1"/>
    <property type="molecule type" value="mRNA"/>
</dbReference>
<dbReference type="EMBL" id="BC069193">
    <property type="protein sequence ID" value="AAH69193.1"/>
    <property type="molecule type" value="mRNA"/>
</dbReference>
<dbReference type="EMBL" id="BC096121">
    <property type="protein sequence ID" value="AAH96121.1"/>
    <property type="molecule type" value="mRNA"/>
</dbReference>
<dbReference type="EMBL" id="BC098112">
    <property type="protein sequence ID" value="AAH98112.1"/>
    <property type="molecule type" value="mRNA"/>
</dbReference>
<dbReference type="EMBL" id="BC098289">
    <property type="protein sequence ID" value="AAH98289.1"/>
    <property type="molecule type" value="mRNA"/>
</dbReference>
<dbReference type="EMBL" id="BC107084">
    <property type="protein sequence ID" value="AAI07085.1"/>
    <property type="molecule type" value="mRNA"/>
</dbReference>
<dbReference type="EMBL" id="BC107085">
    <property type="protein sequence ID" value="AAI07086.1"/>
    <property type="molecule type" value="mRNA"/>
</dbReference>
<dbReference type="EMBL" id="M60756">
    <property type="protein sequence ID" value="AAA63192.1"/>
    <property type="molecule type" value="mRNA"/>
</dbReference>
<dbReference type="CCDS" id="CCDS936.1"/>
<dbReference type="PIR" id="I37467">
    <property type="entry name" value="I37467"/>
</dbReference>
<dbReference type="PIR" id="S65409">
    <property type="entry name" value="S65409"/>
</dbReference>
<dbReference type="RefSeq" id="NP_003519.1">
    <property type="nucleotide sequence ID" value="NM_003528.3"/>
</dbReference>
<dbReference type="PDB" id="4NFT">
    <property type="method" value="X-ray"/>
    <property type="resolution" value="2.61 A"/>
    <property type="chains" value="A/B/C/D=34-126"/>
</dbReference>
<dbReference type="PDB" id="6A7U">
    <property type="method" value="X-ray"/>
    <property type="resolution" value="2.60 A"/>
    <property type="chains" value="A=1-126"/>
</dbReference>
<dbReference type="PDB" id="6KBB">
    <property type="method" value="X-ray"/>
    <property type="resolution" value="2.37 A"/>
    <property type="chains" value="B/D=27-126"/>
</dbReference>
<dbReference type="PDB" id="6M4D">
    <property type="method" value="EM"/>
    <property type="resolution" value="4.40 A"/>
    <property type="chains" value="D/H=1-126"/>
</dbReference>
<dbReference type="PDB" id="6M4G">
    <property type="method" value="EM"/>
    <property type="resolution" value="2.80 A"/>
    <property type="chains" value="D/H=1-126"/>
</dbReference>
<dbReference type="PDB" id="6M4H">
    <property type="method" value="EM"/>
    <property type="resolution" value="3.90 A"/>
    <property type="chains" value="D/H=1-126"/>
</dbReference>
<dbReference type="PDB" id="7BXT">
    <property type="method" value="EM"/>
    <property type="resolution" value="4.20 A"/>
    <property type="chains" value="D/H=1-126"/>
</dbReference>
<dbReference type="PDB" id="7EA8">
    <property type="method" value="EM"/>
    <property type="resolution" value="3.10 A"/>
    <property type="chains" value="D/H=2-126"/>
</dbReference>
<dbReference type="PDB" id="7U0G">
    <property type="method" value="EM"/>
    <property type="resolution" value="2.60 A"/>
    <property type="chains" value="D/H=1-126"/>
</dbReference>
<dbReference type="PDB" id="7U0I">
    <property type="method" value="EM"/>
    <property type="resolution" value="2.60 A"/>
    <property type="chains" value="D/H=1-126"/>
</dbReference>
<dbReference type="PDB" id="7U0J">
    <property type="method" value="EM"/>
    <property type="resolution" value="2.70 A"/>
    <property type="chains" value="D/H=1-126"/>
</dbReference>
<dbReference type="PDB" id="8DK5">
    <property type="method" value="EM"/>
    <property type="resolution" value="2.71 A"/>
    <property type="chains" value="D/H=1-126"/>
</dbReference>
<dbReference type="PDB" id="8EVG">
    <property type="method" value="EM"/>
    <property type="resolution" value="2.75 A"/>
    <property type="chains" value="D/H=1-126"/>
</dbReference>
<dbReference type="PDB" id="8EVH">
    <property type="method" value="EM"/>
    <property type="resolution" value="2.85 A"/>
    <property type="chains" value="D/H=1-126"/>
</dbReference>
<dbReference type="PDB" id="8EVI">
    <property type="method" value="EM"/>
    <property type="resolution" value="2.64 A"/>
    <property type="chains" value="D/H=1-126"/>
</dbReference>
<dbReference type="PDB" id="8EVJ">
    <property type="method" value="EM"/>
    <property type="resolution" value="4.10 A"/>
    <property type="chains" value="D/H=1-126"/>
</dbReference>
<dbReference type="PDB" id="8H1T">
    <property type="method" value="EM"/>
    <property type="resolution" value="3.00 A"/>
    <property type="chains" value="D/H=1-126"/>
</dbReference>
<dbReference type="PDB" id="8SPS">
    <property type="method" value="EM"/>
    <property type="resolution" value="3.00 A"/>
    <property type="chains" value="D/H=1-126"/>
</dbReference>
<dbReference type="PDB" id="8SPU">
    <property type="method" value="EM"/>
    <property type="resolution" value="2.80 A"/>
    <property type="chains" value="D/H=1-126"/>
</dbReference>
<dbReference type="PDB" id="8SYP">
    <property type="method" value="EM"/>
    <property type="resolution" value="2.60 A"/>
    <property type="chains" value="D/H=1-126"/>
</dbReference>
<dbReference type="PDB" id="8UQ8">
    <property type="method" value="X-ray"/>
    <property type="resolution" value="2.34 A"/>
    <property type="chains" value="A/a=34-124"/>
</dbReference>
<dbReference type="PDB" id="8UQ9">
    <property type="method" value="X-ray"/>
    <property type="resolution" value="2.30 A"/>
    <property type="chains" value="A/a=34-124"/>
</dbReference>
<dbReference type="PDB" id="8UQA">
    <property type="method" value="X-ray"/>
    <property type="resolution" value="2.05 A"/>
    <property type="chains" value="K=34-124"/>
</dbReference>
<dbReference type="PDB" id="8UQB">
    <property type="method" value="X-ray"/>
    <property type="resolution" value="2.48 A"/>
    <property type="chains" value="A=34-124"/>
</dbReference>
<dbReference type="PDB" id="8UQC">
    <property type="method" value="X-ray"/>
    <property type="resolution" value="2.61 A"/>
    <property type="chains" value="A=34-124"/>
</dbReference>
<dbReference type="PDB" id="8UQD">
    <property type="method" value="X-ray"/>
    <property type="resolution" value="3.89 A"/>
    <property type="chains" value="B=34-124"/>
</dbReference>
<dbReference type="PDB" id="8UQE">
    <property type="method" value="X-ray"/>
    <property type="resolution" value="3.56 A"/>
    <property type="chains" value="B=34-124"/>
</dbReference>
<dbReference type="PDB" id="8YJF">
    <property type="method" value="X-ray"/>
    <property type="resolution" value="4.40 A"/>
    <property type="chains" value="G=1-126"/>
</dbReference>
<dbReference type="PDBsum" id="4NFT"/>
<dbReference type="PDBsum" id="6A7U"/>
<dbReference type="PDBsum" id="6KBB"/>
<dbReference type="PDBsum" id="6M4D"/>
<dbReference type="PDBsum" id="6M4G"/>
<dbReference type="PDBsum" id="6M4H"/>
<dbReference type="PDBsum" id="7BXT"/>
<dbReference type="PDBsum" id="7EA8"/>
<dbReference type="PDBsum" id="7U0G"/>
<dbReference type="PDBsum" id="7U0I"/>
<dbReference type="PDBsum" id="7U0J"/>
<dbReference type="PDBsum" id="8DK5"/>
<dbReference type="PDBsum" id="8EVG"/>
<dbReference type="PDBsum" id="8EVH"/>
<dbReference type="PDBsum" id="8EVI"/>
<dbReference type="PDBsum" id="8EVJ"/>
<dbReference type="PDBsum" id="8H1T"/>
<dbReference type="PDBsum" id="8SPS"/>
<dbReference type="PDBsum" id="8SPU"/>
<dbReference type="PDBsum" id="8SYP"/>
<dbReference type="PDBsum" id="8UQ8"/>
<dbReference type="PDBsum" id="8UQ9"/>
<dbReference type="PDBsum" id="8UQA"/>
<dbReference type="PDBsum" id="8UQB"/>
<dbReference type="PDBsum" id="8UQC"/>
<dbReference type="PDBsum" id="8UQD"/>
<dbReference type="PDBsum" id="8UQE"/>
<dbReference type="PDBsum" id="8YJF"/>
<dbReference type="EMDB" id="EMD-26258"/>
<dbReference type="EMDB" id="EMD-26260"/>
<dbReference type="EMDB" id="EMD-26261"/>
<dbReference type="EMDB" id="EMD-27483"/>
<dbReference type="EMDB" id="EMD-28628"/>
<dbReference type="EMDB" id="EMD-28629"/>
<dbReference type="EMDB" id="EMD-28630"/>
<dbReference type="EMDB" id="EMD-28631"/>
<dbReference type="EMDB" id="EMD-30076"/>
<dbReference type="EMDB" id="EMD-30077"/>
<dbReference type="EMDB" id="EMD-30078"/>
<dbReference type="EMDB" id="EMD-30237"/>
<dbReference type="EMDB" id="EMD-31040"/>
<dbReference type="EMDB" id="EMD-34431"/>
<dbReference type="EMDB" id="EMD-40683"/>
<dbReference type="EMDB" id="EMD-40686"/>
<dbReference type="EMDB" id="EMD-40889"/>
<dbReference type="SMR" id="Q16778"/>
<dbReference type="BioGRID" id="113945">
    <property type="interactions" value="708"/>
</dbReference>
<dbReference type="CORUM" id="Q16778"/>
<dbReference type="DIP" id="DIP-39324N"/>
<dbReference type="FunCoup" id="Q16778">
    <property type="interactions" value="1495"/>
</dbReference>
<dbReference type="IntAct" id="Q16778">
    <property type="interactions" value="554"/>
</dbReference>
<dbReference type="MINT" id="Q16778"/>
<dbReference type="STRING" id="9606.ENSP00000358151"/>
<dbReference type="GlyCosmos" id="Q16778">
    <property type="glycosylation" value="1 site, 1 glycan"/>
</dbReference>
<dbReference type="GlyGen" id="Q16778">
    <property type="glycosylation" value="1 site, 1 O-linked glycan (1 site)"/>
</dbReference>
<dbReference type="iPTMnet" id="Q16778"/>
<dbReference type="PhosphoSitePlus" id="Q16778"/>
<dbReference type="SwissPalm" id="Q16778"/>
<dbReference type="BioMuta" id="HIST2H2BE"/>
<dbReference type="DMDM" id="7387736"/>
<dbReference type="jPOST" id="Q16778"/>
<dbReference type="MassIVE" id="Q16778"/>
<dbReference type="PaxDb" id="9606-ENSP00000358151"/>
<dbReference type="PeptideAtlas" id="Q16778"/>
<dbReference type="PRIDE" id="Q16778"/>
<dbReference type="Pumba" id="Q16778"/>
<dbReference type="TopDownProteomics" id="Q16778"/>
<dbReference type="Antibodypedia" id="34011">
    <property type="antibodies" value="190 antibodies from 24 providers"/>
</dbReference>
<dbReference type="DNASU" id="8349"/>
<dbReference type="Ensembl" id="ENST00000369155.4">
    <property type="protein sequence ID" value="ENSP00000358151.2"/>
    <property type="gene ID" value="ENSG00000184678.11"/>
</dbReference>
<dbReference type="GeneID" id="8349"/>
<dbReference type="KEGG" id="hsa:8349"/>
<dbReference type="MANE-Select" id="ENST00000369155.4">
    <property type="protein sequence ID" value="ENSP00000358151.2"/>
    <property type="RefSeq nucleotide sequence ID" value="NM_003528.3"/>
    <property type="RefSeq protein sequence ID" value="NP_003519.1"/>
</dbReference>
<dbReference type="UCSC" id="uc001etc.4">
    <property type="organism name" value="human"/>
</dbReference>
<dbReference type="AGR" id="HGNC:4760"/>
<dbReference type="CTD" id="8349"/>
<dbReference type="DisGeNET" id="8349"/>
<dbReference type="GeneCards" id="H2BC21"/>
<dbReference type="HGNC" id="HGNC:4760">
    <property type="gene designation" value="H2BC21"/>
</dbReference>
<dbReference type="HPA" id="ENSG00000184678">
    <property type="expression patterns" value="Low tissue specificity"/>
</dbReference>
<dbReference type="MIM" id="601831">
    <property type="type" value="gene"/>
</dbReference>
<dbReference type="neXtProt" id="NX_Q16778"/>
<dbReference type="OpenTargets" id="ENSG00000184678"/>
<dbReference type="VEuPathDB" id="HostDB:ENSG00000184678"/>
<dbReference type="eggNOG" id="KOG1744">
    <property type="taxonomic scope" value="Eukaryota"/>
</dbReference>
<dbReference type="GeneTree" id="ENSGT01110000267152"/>
<dbReference type="HOGENOM" id="CLU_075666_2_1_1"/>
<dbReference type="InParanoid" id="Q16778"/>
<dbReference type="OMA" id="HAFSEGT"/>
<dbReference type="OrthoDB" id="9537006at2759"/>
<dbReference type="PAN-GO" id="Q16778">
    <property type="GO annotations" value="2 GO annotations based on evolutionary models"/>
</dbReference>
<dbReference type="PhylomeDB" id="Q16778"/>
<dbReference type="TreeFam" id="TF300212"/>
<dbReference type="PathwayCommons" id="Q16778"/>
<dbReference type="Reactome" id="R-HSA-110328">
    <property type="pathway name" value="Recognition and association of DNA glycosylase with site containing an affected pyrimidine"/>
</dbReference>
<dbReference type="Reactome" id="R-HSA-110329">
    <property type="pathway name" value="Cleavage of the damaged pyrimidine"/>
</dbReference>
<dbReference type="Reactome" id="R-HSA-110330">
    <property type="pathway name" value="Recognition and association of DNA glycosylase with site containing an affected purine"/>
</dbReference>
<dbReference type="Reactome" id="R-HSA-110331">
    <property type="pathway name" value="Cleavage of the damaged purine"/>
</dbReference>
<dbReference type="Reactome" id="R-HSA-1221632">
    <property type="pathway name" value="Meiotic synapsis"/>
</dbReference>
<dbReference type="Reactome" id="R-HSA-171306">
    <property type="pathway name" value="Packaging Of Telomere Ends"/>
</dbReference>
<dbReference type="Reactome" id="R-HSA-1912408">
    <property type="pathway name" value="Pre-NOTCH Transcription and Translation"/>
</dbReference>
<dbReference type="Reactome" id="R-HSA-201722">
    <property type="pathway name" value="Formation of the beta-catenin:TCF transactivating complex"/>
</dbReference>
<dbReference type="Reactome" id="R-HSA-212300">
    <property type="pathway name" value="PRC2 methylates histones and DNA"/>
</dbReference>
<dbReference type="Reactome" id="R-HSA-2299718">
    <property type="pathway name" value="Condensation of Prophase Chromosomes"/>
</dbReference>
<dbReference type="Reactome" id="R-HSA-2559580">
    <property type="pathway name" value="Oxidative Stress Induced Senescence"/>
</dbReference>
<dbReference type="Reactome" id="R-HSA-2559582">
    <property type="pathway name" value="Senescence-Associated Secretory Phenotype (SASP)"/>
</dbReference>
<dbReference type="Reactome" id="R-HSA-2559586">
    <property type="pathway name" value="DNA Damage/Telomere Stress Induced Senescence"/>
</dbReference>
<dbReference type="Reactome" id="R-HSA-3214815">
    <property type="pathway name" value="HDACs deacetylate histones"/>
</dbReference>
<dbReference type="Reactome" id="R-HSA-3214847">
    <property type="pathway name" value="HATs acetylate histones"/>
</dbReference>
<dbReference type="Reactome" id="R-HSA-427359">
    <property type="pathway name" value="SIRT1 negatively regulates rRNA expression"/>
</dbReference>
<dbReference type="Reactome" id="R-HSA-427389">
    <property type="pathway name" value="ERCC6 (CSB) and EHMT2 (G9a) positively regulate rRNA expression"/>
</dbReference>
<dbReference type="Reactome" id="R-HSA-427413">
    <property type="pathway name" value="NoRC negatively regulates rRNA expression"/>
</dbReference>
<dbReference type="Reactome" id="R-HSA-5250924">
    <property type="pathway name" value="B-WICH complex positively regulates rRNA expression"/>
</dbReference>
<dbReference type="Reactome" id="R-HSA-5334118">
    <property type="pathway name" value="DNA methylation"/>
</dbReference>
<dbReference type="Reactome" id="R-HSA-5578749">
    <property type="pathway name" value="Transcriptional regulation by small RNAs"/>
</dbReference>
<dbReference type="Reactome" id="R-HSA-5617472">
    <property type="pathway name" value="Activation of anterior HOX genes in hindbrain development during early embryogenesis"/>
</dbReference>
<dbReference type="Reactome" id="R-HSA-5625886">
    <property type="pathway name" value="Activated PKN1 stimulates transcription of AR (androgen receptor) regulated genes KLK2 and KLK3"/>
</dbReference>
<dbReference type="Reactome" id="R-HSA-5689880">
    <property type="pathway name" value="Ub-specific processing proteases"/>
</dbReference>
<dbReference type="Reactome" id="R-HSA-5693565">
    <property type="pathway name" value="Recruitment and ATM-mediated phosphorylation of repair and signaling proteins at DNA double strand breaks"/>
</dbReference>
<dbReference type="Reactome" id="R-HSA-5693571">
    <property type="pathway name" value="Nonhomologous End-Joining (NHEJ)"/>
</dbReference>
<dbReference type="Reactome" id="R-HSA-5693607">
    <property type="pathway name" value="Processing of DNA double-strand break ends"/>
</dbReference>
<dbReference type="Reactome" id="R-HSA-606279">
    <property type="pathway name" value="Deposition of new CENPA-containing nucleosomes at the centromere"/>
</dbReference>
<dbReference type="Reactome" id="R-HSA-68616">
    <property type="pathway name" value="Assembly of the ORC complex at the origin of replication"/>
</dbReference>
<dbReference type="Reactome" id="R-HSA-69473">
    <property type="pathway name" value="G2/M DNA damage checkpoint"/>
</dbReference>
<dbReference type="Reactome" id="R-HSA-73728">
    <property type="pathway name" value="RNA Polymerase I Promoter Opening"/>
</dbReference>
<dbReference type="Reactome" id="R-HSA-73772">
    <property type="pathway name" value="RNA Polymerase I Promoter Escape"/>
</dbReference>
<dbReference type="Reactome" id="R-HSA-8936459">
    <property type="pathway name" value="RUNX1 regulates genes involved in megakaryocyte differentiation and platelet function"/>
</dbReference>
<dbReference type="Reactome" id="R-HSA-8939236">
    <property type="pathway name" value="RUNX1 regulates transcription of genes involved in differentiation of HSCs"/>
</dbReference>
<dbReference type="Reactome" id="R-HSA-9018519">
    <property type="pathway name" value="Estrogen-dependent gene expression"/>
</dbReference>
<dbReference type="Reactome" id="R-HSA-912446">
    <property type="pathway name" value="Meiotic recombination"/>
</dbReference>
<dbReference type="Reactome" id="R-HSA-9609690">
    <property type="pathway name" value="HCMV Early Events"/>
</dbReference>
<dbReference type="Reactome" id="R-HSA-9610379">
    <property type="pathway name" value="HCMV Late Events"/>
</dbReference>
<dbReference type="Reactome" id="R-HSA-9616222">
    <property type="pathway name" value="Transcriptional regulation of granulopoiesis"/>
</dbReference>
<dbReference type="Reactome" id="R-HSA-9670095">
    <property type="pathway name" value="Inhibition of DNA recombination at telomere"/>
</dbReference>
<dbReference type="Reactome" id="R-HSA-9710421">
    <property type="pathway name" value="Defective pyroptosis"/>
</dbReference>
<dbReference type="Reactome" id="R-HSA-977225">
    <property type="pathway name" value="Amyloid fiber formation"/>
</dbReference>
<dbReference type="Reactome" id="R-HSA-9821002">
    <property type="pathway name" value="Chromatin modifications during the maternal to zygotic transition (MZT)"/>
</dbReference>
<dbReference type="Reactome" id="R-HSA-9821993">
    <property type="pathway name" value="Replacement of protamines by nucleosomes in the male pronucleus"/>
</dbReference>
<dbReference type="Reactome" id="R-HSA-9841922">
    <property type="pathway name" value="MLL4 and MLL3 complexes regulate expression of PPARG target genes in adipogenesis and hepatic steatosis"/>
</dbReference>
<dbReference type="Reactome" id="R-HSA-9843940">
    <property type="pathway name" value="Regulation of endogenous retroelements by KRAB-ZFP proteins"/>
</dbReference>
<dbReference type="Reactome" id="R-HSA-9843970">
    <property type="pathway name" value="Regulation of endogenous retroelements by the Human Silencing Hub (HUSH) complex"/>
</dbReference>
<dbReference type="Reactome" id="R-HSA-9845323">
    <property type="pathway name" value="Regulation of endogenous retroelements by Piwi-interacting RNAs (piRNAs)"/>
</dbReference>
<dbReference type="SignaLink" id="Q16778"/>
<dbReference type="SIGNOR" id="Q16778"/>
<dbReference type="BioGRID-ORCS" id="8349">
    <property type="hits" value="200 hits in 1058 CRISPR screens"/>
</dbReference>
<dbReference type="CD-CODE" id="91857CE7">
    <property type="entry name" value="Nucleolus"/>
</dbReference>
<dbReference type="ChiTaRS" id="HIST2H2BE">
    <property type="organism name" value="human"/>
</dbReference>
<dbReference type="GeneWiki" id="HIST2H2BE"/>
<dbReference type="GenomeRNAi" id="8349"/>
<dbReference type="Pharos" id="Q16778">
    <property type="development level" value="Tbio"/>
</dbReference>
<dbReference type="PRO" id="PR:Q16778"/>
<dbReference type="Proteomes" id="UP000005640">
    <property type="component" value="Chromosome 1"/>
</dbReference>
<dbReference type="RNAct" id="Q16778">
    <property type="molecule type" value="protein"/>
</dbReference>
<dbReference type="Bgee" id="ENSG00000184678">
    <property type="expression patterns" value="Expressed in heart right ventricle and 201 other cell types or tissues"/>
</dbReference>
<dbReference type="GO" id="GO:0005829">
    <property type="term" value="C:cytosol"/>
    <property type="evidence" value="ECO:0000314"/>
    <property type="project" value="HPA"/>
</dbReference>
<dbReference type="GO" id="GO:0070062">
    <property type="term" value="C:extracellular exosome"/>
    <property type="evidence" value="ECO:0007005"/>
    <property type="project" value="UniProtKB"/>
</dbReference>
<dbReference type="GO" id="GO:0005615">
    <property type="term" value="C:extracellular space"/>
    <property type="evidence" value="ECO:0000314"/>
    <property type="project" value="UniProtKB"/>
</dbReference>
<dbReference type="GO" id="GO:0005654">
    <property type="term" value="C:nucleoplasm"/>
    <property type="evidence" value="ECO:0000314"/>
    <property type="project" value="HPA"/>
</dbReference>
<dbReference type="GO" id="GO:0000786">
    <property type="term" value="C:nucleosome"/>
    <property type="evidence" value="ECO:0000303"/>
    <property type="project" value="UniProtKB"/>
</dbReference>
<dbReference type="GO" id="GO:0005634">
    <property type="term" value="C:nucleus"/>
    <property type="evidence" value="ECO:0000314"/>
    <property type="project" value="UniProtKB"/>
</dbReference>
<dbReference type="GO" id="GO:0003677">
    <property type="term" value="F:DNA binding"/>
    <property type="evidence" value="ECO:0000303"/>
    <property type="project" value="UniProtKB"/>
</dbReference>
<dbReference type="GO" id="GO:0046982">
    <property type="term" value="F:protein heterodimerization activity"/>
    <property type="evidence" value="ECO:0007669"/>
    <property type="project" value="InterPro"/>
</dbReference>
<dbReference type="GO" id="GO:0030527">
    <property type="term" value="F:structural constituent of chromatin"/>
    <property type="evidence" value="ECO:0007669"/>
    <property type="project" value="InterPro"/>
</dbReference>
<dbReference type="GO" id="GO:0019731">
    <property type="term" value="P:antibacterial humoral response"/>
    <property type="evidence" value="ECO:0000314"/>
    <property type="project" value="UniProtKB"/>
</dbReference>
<dbReference type="GO" id="GO:0061844">
    <property type="term" value="P:antimicrobial humoral immune response mediated by antimicrobial peptide"/>
    <property type="evidence" value="ECO:0000314"/>
    <property type="project" value="UniProtKB"/>
</dbReference>
<dbReference type="GO" id="GO:0050830">
    <property type="term" value="P:defense response to Gram-positive bacterium"/>
    <property type="evidence" value="ECO:0000314"/>
    <property type="project" value="UniProtKB"/>
</dbReference>
<dbReference type="GO" id="GO:0002227">
    <property type="term" value="P:innate immune response in mucosa"/>
    <property type="evidence" value="ECO:0000314"/>
    <property type="project" value="UniProtKB"/>
</dbReference>
<dbReference type="GO" id="GO:0006334">
    <property type="term" value="P:nucleosome assembly"/>
    <property type="evidence" value="ECO:0000303"/>
    <property type="project" value="UniProtKB"/>
</dbReference>
<dbReference type="CDD" id="cd22910">
    <property type="entry name" value="HFD_H2B"/>
    <property type="match status" value="1"/>
</dbReference>
<dbReference type="FunFam" id="1.10.20.10:FF:000003">
    <property type="entry name" value="Histone H2B"/>
    <property type="match status" value="1"/>
</dbReference>
<dbReference type="Gene3D" id="1.10.20.10">
    <property type="entry name" value="Histone, subunit A"/>
    <property type="match status" value="1"/>
</dbReference>
<dbReference type="InterPro" id="IPR009072">
    <property type="entry name" value="Histone-fold"/>
</dbReference>
<dbReference type="InterPro" id="IPR007125">
    <property type="entry name" value="Histone_H2A/H2B/H3"/>
</dbReference>
<dbReference type="InterPro" id="IPR000558">
    <property type="entry name" value="Histone_H2B"/>
</dbReference>
<dbReference type="InterPro" id="IPR055333">
    <property type="entry name" value="HISTONE_H2B_site"/>
</dbReference>
<dbReference type="PANTHER" id="PTHR23428">
    <property type="entry name" value="HISTONE H2B"/>
    <property type="match status" value="1"/>
</dbReference>
<dbReference type="Pfam" id="PF00125">
    <property type="entry name" value="Histone"/>
    <property type="match status" value="1"/>
</dbReference>
<dbReference type="PRINTS" id="PR00621">
    <property type="entry name" value="HISTONEH2B"/>
</dbReference>
<dbReference type="SMART" id="SM00427">
    <property type="entry name" value="H2B"/>
    <property type="match status" value="1"/>
</dbReference>
<dbReference type="SUPFAM" id="SSF47113">
    <property type="entry name" value="Histone-fold"/>
    <property type="match status" value="1"/>
</dbReference>
<dbReference type="PROSITE" id="PS00357">
    <property type="entry name" value="HISTONE_H2B"/>
    <property type="match status" value="1"/>
</dbReference>
<evidence type="ECO:0000250" key="1">
    <source>
        <dbReference type="UniProtKB" id="P23527"/>
    </source>
</evidence>
<evidence type="ECO:0000250" key="2">
    <source>
        <dbReference type="UniProtKB" id="P33778"/>
    </source>
</evidence>
<evidence type="ECO:0000250" key="3">
    <source>
        <dbReference type="UniProtKB" id="P58876"/>
    </source>
</evidence>
<evidence type="ECO:0000250" key="4">
    <source>
        <dbReference type="UniProtKB" id="P62807"/>
    </source>
</evidence>
<evidence type="ECO:0000250" key="5">
    <source>
        <dbReference type="UniProtKB" id="Q00729"/>
    </source>
</evidence>
<evidence type="ECO:0000250" key="6">
    <source>
        <dbReference type="UniProtKB" id="Q5QNW6"/>
    </source>
</evidence>
<evidence type="ECO:0000250" key="7">
    <source>
        <dbReference type="UniProtKB" id="Q64475"/>
    </source>
</evidence>
<evidence type="ECO:0000250" key="8">
    <source>
        <dbReference type="UniProtKB" id="Q64524"/>
    </source>
</evidence>
<evidence type="ECO:0000250" key="9">
    <source>
        <dbReference type="UniProtKB" id="Q6ZWY9"/>
    </source>
</evidence>
<evidence type="ECO:0000250" key="10">
    <source>
        <dbReference type="UniProtKB" id="Q96A08"/>
    </source>
</evidence>
<evidence type="ECO:0000256" key="11">
    <source>
        <dbReference type="SAM" id="MobiDB-lite"/>
    </source>
</evidence>
<evidence type="ECO:0000269" key="12">
    <source>
    </source>
</evidence>
<evidence type="ECO:0000269" key="13">
    <source>
    </source>
</evidence>
<evidence type="ECO:0000269" key="14">
    <source>
    </source>
</evidence>
<evidence type="ECO:0000269" key="15">
    <source>
    </source>
</evidence>
<evidence type="ECO:0000269" key="16">
    <source>
    </source>
</evidence>
<evidence type="ECO:0000269" key="17">
    <source>
    </source>
</evidence>
<evidence type="ECO:0000269" key="18">
    <source>
    </source>
</evidence>
<evidence type="ECO:0000269" key="19">
    <source>
    </source>
</evidence>
<evidence type="ECO:0000269" key="20">
    <source>
    </source>
</evidence>
<evidence type="ECO:0000269" key="21">
    <source>
    </source>
</evidence>
<evidence type="ECO:0000269" key="22">
    <source>
    </source>
</evidence>
<evidence type="ECO:0000269" key="23">
    <source>
    </source>
</evidence>
<evidence type="ECO:0000269" key="24">
    <source>
    </source>
</evidence>
<evidence type="ECO:0000269" key="25">
    <source>
    </source>
</evidence>
<evidence type="ECO:0000269" key="26">
    <source>
    </source>
</evidence>
<evidence type="ECO:0000269" key="27">
    <source>
    </source>
</evidence>
<evidence type="ECO:0000269" key="28">
    <source>
    </source>
</evidence>
<evidence type="ECO:0000269" key="29">
    <source>
    </source>
</evidence>
<evidence type="ECO:0000269" key="30">
    <source>
    </source>
</evidence>
<evidence type="ECO:0000305" key="31"/>
<evidence type="ECO:0000312" key="32">
    <source>
        <dbReference type="HGNC" id="HGNC:4760"/>
    </source>
</evidence>
<evidence type="ECO:0007829" key="33">
    <source>
        <dbReference type="PDB" id="6KBB"/>
    </source>
</evidence>
<evidence type="ECO:0007829" key="34">
    <source>
        <dbReference type="PDB" id="8EVI"/>
    </source>
</evidence>
<evidence type="ECO:0007829" key="35">
    <source>
        <dbReference type="PDB" id="8UQA"/>
    </source>
</evidence>